<comment type="function">
    <text evidence="1">Participates actively in the response to hyperosmotic and heat shock by preventing the aggregation of stress-denatured proteins, in association with DnaK and GrpE. It is the nucleotide exchange factor for DnaK and may function as a thermosensor. Unfolded proteins bind initially to DnaJ; upon interaction with the DnaJ-bound protein, DnaK hydrolyzes its bound ATP, resulting in the formation of a stable complex. GrpE releases ADP from DnaK; ATP binding to DnaK triggers the release of the substrate protein, thus completing the reaction cycle. Several rounds of ATP-dependent interactions between DnaJ, DnaK and GrpE are required for fully efficient folding.</text>
</comment>
<comment type="subunit">
    <text evidence="1">Homodimer.</text>
</comment>
<comment type="subcellular location">
    <subcellularLocation>
        <location evidence="1">Cytoplasm</location>
    </subcellularLocation>
</comment>
<comment type="similarity">
    <text evidence="1">Belongs to the GrpE family.</text>
</comment>
<name>GRPE_ECTM1</name>
<protein>
    <recommendedName>
        <fullName evidence="1">Protein GrpE</fullName>
    </recommendedName>
    <alternativeName>
        <fullName evidence="1">HSP-70 cofactor</fullName>
    </alternativeName>
</protein>
<feature type="chain" id="PRO_1000053624" description="Protein GrpE">
    <location>
        <begin position="1"/>
        <end position="189"/>
    </location>
</feature>
<feature type="region of interest" description="Disordered" evidence="2">
    <location>
        <begin position="1"/>
        <end position="24"/>
    </location>
</feature>
<feature type="compositionally biased region" description="Low complexity" evidence="2">
    <location>
        <begin position="10"/>
        <end position="24"/>
    </location>
</feature>
<organism>
    <name type="scientific">Ectopseudomonas mendocina (strain ymp)</name>
    <name type="common">Pseudomonas mendocina</name>
    <dbReference type="NCBI Taxonomy" id="399739"/>
    <lineage>
        <taxon>Bacteria</taxon>
        <taxon>Pseudomonadati</taxon>
        <taxon>Pseudomonadota</taxon>
        <taxon>Gammaproteobacteria</taxon>
        <taxon>Pseudomonadales</taxon>
        <taxon>Pseudomonadaceae</taxon>
        <taxon>Ectopseudomonas</taxon>
    </lineage>
</organism>
<keyword id="KW-0143">Chaperone</keyword>
<keyword id="KW-0963">Cytoplasm</keyword>
<keyword id="KW-0346">Stress response</keyword>
<evidence type="ECO:0000255" key="1">
    <source>
        <dbReference type="HAMAP-Rule" id="MF_01151"/>
    </source>
</evidence>
<evidence type="ECO:0000256" key="2">
    <source>
        <dbReference type="SAM" id="MobiDB-lite"/>
    </source>
</evidence>
<accession>A4XYF7</accession>
<reference key="1">
    <citation type="submission" date="2007-04" db="EMBL/GenBank/DDBJ databases">
        <title>Complete sequence of Pseudomonas mendocina ymp.</title>
        <authorList>
            <consortium name="US DOE Joint Genome Institute"/>
            <person name="Copeland A."/>
            <person name="Lucas S."/>
            <person name="Lapidus A."/>
            <person name="Barry K."/>
            <person name="Glavina del Rio T."/>
            <person name="Dalin E."/>
            <person name="Tice H."/>
            <person name="Pitluck S."/>
            <person name="Kiss H."/>
            <person name="Brettin T."/>
            <person name="Detter J.C."/>
            <person name="Bruce D."/>
            <person name="Han C."/>
            <person name="Schmutz J."/>
            <person name="Larimer F."/>
            <person name="Land M."/>
            <person name="Hauser L."/>
            <person name="Kyrpides N."/>
            <person name="Mikhailova N."/>
            <person name="Hersman L."/>
            <person name="Dubois J."/>
            <person name="Maurice P."/>
            <person name="Richardson P."/>
        </authorList>
    </citation>
    <scope>NUCLEOTIDE SEQUENCE [LARGE SCALE GENOMIC DNA]</scope>
    <source>
        <strain>ymp</strain>
    </source>
</reference>
<dbReference type="EMBL" id="CP000680">
    <property type="protein sequence ID" value="ABP86373.1"/>
    <property type="molecule type" value="Genomic_DNA"/>
</dbReference>
<dbReference type="SMR" id="A4XYF7"/>
<dbReference type="STRING" id="399739.Pmen_3625"/>
<dbReference type="KEGG" id="pmy:Pmen_3625"/>
<dbReference type="PATRIC" id="fig|399739.8.peg.3674"/>
<dbReference type="eggNOG" id="COG0576">
    <property type="taxonomic scope" value="Bacteria"/>
</dbReference>
<dbReference type="HOGENOM" id="CLU_057217_6_0_6"/>
<dbReference type="OrthoDB" id="9789811at2"/>
<dbReference type="GO" id="GO:0005829">
    <property type="term" value="C:cytosol"/>
    <property type="evidence" value="ECO:0007669"/>
    <property type="project" value="TreeGrafter"/>
</dbReference>
<dbReference type="GO" id="GO:0000774">
    <property type="term" value="F:adenyl-nucleotide exchange factor activity"/>
    <property type="evidence" value="ECO:0007669"/>
    <property type="project" value="InterPro"/>
</dbReference>
<dbReference type="GO" id="GO:0042803">
    <property type="term" value="F:protein homodimerization activity"/>
    <property type="evidence" value="ECO:0007669"/>
    <property type="project" value="InterPro"/>
</dbReference>
<dbReference type="GO" id="GO:0051087">
    <property type="term" value="F:protein-folding chaperone binding"/>
    <property type="evidence" value="ECO:0007669"/>
    <property type="project" value="InterPro"/>
</dbReference>
<dbReference type="GO" id="GO:0051082">
    <property type="term" value="F:unfolded protein binding"/>
    <property type="evidence" value="ECO:0007669"/>
    <property type="project" value="TreeGrafter"/>
</dbReference>
<dbReference type="GO" id="GO:0006457">
    <property type="term" value="P:protein folding"/>
    <property type="evidence" value="ECO:0007669"/>
    <property type="project" value="InterPro"/>
</dbReference>
<dbReference type="CDD" id="cd00446">
    <property type="entry name" value="GrpE"/>
    <property type="match status" value="1"/>
</dbReference>
<dbReference type="FunFam" id="2.30.22.10:FF:000001">
    <property type="entry name" value="Protein GrpE"/>
    <property type="match status" value="1"/>
</dbReference>
<dbReference type="Gene3D" id="3.90.20.20">
    <property type="match status" value="1"/>
</dbReference>
<dbReference type="Gene3D" id="2.30.22.10">
    <property type="entry name" value="Head domain of nucleotide exchange factor GrpE"/>
    <property type="match status" value="1"/>
</dbReference>
<dbReference type="HAMAP" id="MF_01151">
    <property type="entry name" value="GrpE"/>
    <property type="match status" value="1"/>
</dbReference>
<dbReference type="InterPro" id="IPR000740">
    <property type="entry name" value="GrpE"/>
</dbReference>
<dbReference type="InterPro" id="IPR013805">
    <property type="entry name" value="GrpE_coiled_coil"/>
</dbReference>
<dbReference type="InterPro" id="IPR009012">
    <property type="entry name" value="GrpE_head"/>
</dbReference>
<dbReference type="NCBIfam" id="NF010737">
    <property type="entry name" value="PRK14139.1"/>
    <property type="match status" value="1"/>
</dbReference>
<dbReference type="NCBIfam" id="NF010738">
    <property type="entry name" value="PRK14140.1"/>
    <property type="match status" value="1"/>
</dbReference>
<dbReference type="NCBIfam" id="NF010748">
    <property type="entry name" value="PRK14150.1"/>
    <property type="match status" value="1"/>
</dbReference>
<dbReference type="NCBIfam" id="NF010749">
    <property type="entry name" value="PRK14151.1"/>
    <property type="match status" value="1"/>
</dbReference>
<dbReference type="PANTHER" id="PTHR21237">
    <property type="entry name" value="GRPE PROTEIN"/>
    <property type="match status" value="1"/>
</dbReference>
<dbReference type="PANTHER" id="PTHR21237:SF23">
    <property type="entry name" value="GRPE PROTEIN HOMOLOG, MITOCHONDRIAL"/>
    <property type="match status" value="1"/>
</dbReference>
<dbReference type="Pfam" id="PF01025">
    <property type="entry name" value="GrpE"/>
    <property type="match status" value="1"/>
</dbReference>
<dbReference type="PRINTS" id="PR00773">
    <property type="entry name" value="GRPEPROTEIN"/>
</dbReference>
<dbReference type="SUPFAM" id="SSF58014">
    <property type="entry name" value="Coiled-coil domain of nucleotide exchange factor GrpE"/>
    <property type="match status" value="1"/>
</dbReference>
<dbReference type="SUPFAM" id="SSF51064">
    <property type="entry name" value="Head domain of nucleotide exchange factor GrpE"/>
    <property type="match status" value="1"/>
</dbReference>
<dbReference type="PROSITE" id="PS01071">
    <property type="entry name" value="GRPE"/>
    <property type="match status" value="1"/>
</dbReference>
<proteinExistence type="inferred from homology"/>
<gene>
    <name evidence="1" type="primary">grpE</name>
    <name type="ordered locus">Pmen_3625</name>
</gene>
<sequence>MADEQNLDTQNPEAQAAENAAPSDDLAARVQALEEQLAAAQDQSLRMAAELQNVRRRAEQDVEKAHKFALEKFANDLLPVVDSLERGLELSSPDDEAIKGVREGMQLTLKLFIDTLARHQLEAVEPHGEPFNPEHHQAMAMEESTHVEPNSVLKVFQKGYLLNGRLLRPAMVVVSKAPTTPPPSIDEQA</sequence>